<protein>
    <recommendedName>
        <fullName>Elongation factor 2</fullName>
        <shortName>EF-2</shortName>
        <ecNumber evidence="2">3.6.5.-</ecNumber>
    </recommendedName>
</protein>
<reference key="1">
    <citation type="journal article" date="1993" name="DNA Cell Biol.">
        <title>Molecular characterization of the cDNA coding for translation elongation factor-2 of pathogenic Entamoeba histolytica.</title>
        <authorList>
            <person name="Plaimauer B."/>
            <person name="Ortner S."/>
            <person name="Wiedermann G."/>
            <person name="Scheiner O."/>
            <person name="Duchene M."/>
        </authorList>
    </citation>
    <scope>NUCLEOTIDE SEQUENCE [MRNA]</scope>
    <source>
        <strain>SFL-3</strain>
    </source>
</reference>
<reference key="2">
    <citation type="journal article" date="1994" name="Jpn. J. Genet.">
        <title>Phylogenetic place of a mitochondria-lacking protozoan, Entamoeba histolytica, inferred from amino acid sequences of elongation factor 2'.</title>
        <authorList>
            <person name="Shirakura T."/>
            <person name="Hashimoto T."/>
            <person name="Nakamura Y."/>
            <person name="Kamaishi T."/>
            <person name="Cao Y."/>
            <person name="Adachi J."/>
            <person name="Hasegawa M."/>
            <person name="Yamamoto A."/>
            <person name="Goto N."/>
        </authorList>
    </citation>
    <scope>NUCLEOTIDE SEQUENCE [GENOMIC DNA] OF 30-790</scope>
    <source>
        <strain>HK-9</strain>
    </source>
</reference>
<proteinExistence type="evidence at transcript level"/>
<sequence>MSSTGVKTMKDFMLNKSNIRNMCVIAHVDHGKSTLTDSLVTLAGIISNEKAGVARYTDTRPDEQERCITIKSTSISMYYEIEDKEDIPADANGNGFLINLIDSPGHVDFSSEVTAALRVTDGALVVVDCVEGVCVQTETVLRQALTERVKPIVIINKVDRVILELKEEPEEAYQSFCRSIENVNVLISTYKDELLGDVQVSPGEGTVAFGSGLHGWAFTLEKFAKMWSAKFGIDRKRMLEKLWGDNYWDAKAKKWKKNGKGDHGEVLQRGFVQFCFDPITKLFNAIMEGRKADYEKMLTNLQIKLSADDKEKEGKELLKTVMKLWLPAGVTLLEMIVLHLPSPVVAQKYRTSNLYTGPMDDEAAKAMANCDEKGPLMMYVSKMIPTNDKGRFYAFGRVFSGTIRTGGKARICGPNYVPGKKDDCVIKNIQRTMLMMGRYTDPIDECPCGNVIGLVGVDQYLLKSGTITDSVAHIIKDMKFSVSPVVRVAVETKNPSDLPKLVEGMKRLSRSDPLCLCYTEESGEHIVAGAGELHLEVCLKELQEDYCSGVPLIVTEPVVSFRETITEPSRIQCLSKSANNQNRLFMRAFPFPEGLAEDIEAGEIKPDTDFKERAKFLSEKYGWDVDEARKIWCFGPDNCGPNLFVDVTKGIQYLNEVKDSIVNGFNNAMHDGVVCNEQIRGVRINLEDVKLHADAIHRGGAQMIPCARRCCFACVLTGAPSLLEPMYLAEIQCPESAIGGIYTVMSRRRGKIISEEQRPGTPLFNVRAYLPVCESFGFTADLRSHTSGQAFPQCVFDHWQLLNGDVTDATSKVGSIVAAIRKRKGLPEGVPGLDKFYDKL</sequence>
<comment type="function">
    <text evidence="2">Catalyzes the GTP-dependent ribosomal translocation step during translation elongation. During this step, the ribosome changes from the pre-translocational (PRE) to the post-translocational (POST) state as the newly formed A-site-bound peptidyl-tRNA and P-site-bound deacylated tRNA move to the P and E sites, respectively. Catalyzes the coordinated movement of the two tRNA molecules, the mRNA and conformational changes in the ribosome.</text>
</comment>
<comment type="catalytic activity">
    <reaction evidence="2">
        <text>GTP + H2O = GDP + phosphate + H(+)</text>
        <dbReference type="Rhea" id="RHEA:19669"/>
        <dbReference type="ChEBI" id="CHEBI:15377"/>
        <dbReference type="ChEBI" id="CHEBI:15378"/>
        <dbReference type="ChEBI" id="CHEBI:37565"/>
        <dbReference type="ChEBI" id="CHEBI:43474"/>
        <dbReference type="ChEBI" id="CHEBI:58189"/>
    </reaction>
    <physiologicalReaction direction="left-to-right" evidence="2">
        <dbReference type="Rhea" id="RHEA:19670"/>
    </physiologicalReaction>
</comment>
<comment type="subcellular location">
    <subcellularLocation>
        <location evidence="2">Cytoplasm</location>
    </subcellularLocation>
</comment>
<comment type="PTM">
    <text evidence="1">Phosphorylation by EF-2 kinase completely inactivates EF-2.</text>
</comment>
<comment type="similarity">
    <text evidence="3">Belongs to the TRAFAC class translation factor GTPase superfamily. Classic translation factor GTPase family. EF-G/EF-2 subfamily.</text>
</comment>
<organism>
    <name type="scientific">Entamoeba histolytica</name>
    <dbReference type="NCBI Taxonomy" id="5759"/>
    <lineage>
        <taxon>Eukaryota</taxon>
        <taxon>Amoebozoa</taxon>
        <taxon>Evosea</taxon>
        <taxon>Archamoebae</taxon>
        <taxon>Mastigamoebida</taxon>
        <taxon>Entamoebidae</taxon>
        <taxon>Entamoeba</taxon>
    </lineage>
</organism>
<evidence type="ECO:0000250" key="1">
    <source>
        <dbReference type="UniProtKB" id="P13639"/>
    </source>
</evidence>
<evidence type="ECO:0000250" key="2">
    <source>
        <dbReference type="UniProtKB" id="P32324"/>
    </source>
</evidence>
<evidence type="ECO:0000255" key="3">
    <source>
        <dbReference type="PROSITE-ProRule" id="PRU01059"/>
    </source>
</evidence>
<evidence type="ECO:0000305" key="4"/>
<name>EF2_ENTHI</name>
<feature type="chain" id="PRO_0000091013" description="Elongation factor 2">
    <location>
        <begin position="1"/>
        <end position="840"/>
    </location>
</feature>
<feature type="domain" description="tr-type G" evidence="3">
    <location>
        <begin position="17"/>
        <end position="251"/>
    </location>
</feature>
<feature type="binding site" evidence="2">
    <location>
        <begin position="26"/>
        <end position="33"/>
    </location>
    <ligand>
        <name>GTP</name>
        <dbReference type="ChEBI" id="CHEBI:37565"/>
    </ligand>
</feature>
<feature type="binding site" evidence="2">
    <location>
        <begin position="156"/>
        <end position="159"/>
    </location>
    <ligand>
        <name>GTP</name>
        <dbReference type="ChEBI" id="CHEBI:37565"/>
    </ligand>
</feature>
<feature type="binding site" evidence="2">
    <location>
        <begin position="211"/>
        <end position="213"/>
    </location>
    <ligand>
        <name>GTP</name>
        <dbReference type="ChEBI" id="CHEBI:37565"/>
    </ligand>
</feature>
<feature type="modified residue" description="Phosphothreonine" evidence="1">
    <location>
        <position position="57"/>
    </location>
</feature>
<feature type="modified residue" description="Phosphothreonine" evidence="1">
    <location>
        <position position="59"/>
    </location>
</feature>
<feature type="modified residue" description="Diphthamide" evidence="2">
    <location>
        <position position="697"/>
    </location>
</feature>
<feature type="sequence conflict" description="In Ref. 2; BAA04800." evidence="4" ref="2">
    <original>V</original>
    <variation>DT</variation>
    <location>
        <position position="471"/>
    </location>
</feature>
<feature type="sequence conflict" description="In Ref. 2; BAA04800." evidence="4" ref="2">
    <original>E</original>
    <variation>D</variation>
    <location>
        <position position="541"/>
    </location>
</feature>
<feature type="sequence conflict" description="In Ref. 2; BAA04800." evidence="4" ref="2">
    <original>P</original>
    <variation>A</variation>
    <location>
        <position position="592"/>
    </location>
</feature>
<keyword id="KW-0963">Cytoplasm</keyword>
<keyword id="KW-0251">Elongation factor</keyword>
<keyword id="KW-0342">GTP-binding</keyword>
<keyword id="KW-0378">Hydrolase</keyword>
<keyword id="KW-0547">Nucleotide-binding</keyword>
<keyword id="KW-0597">Phosphoprotein</keyword>
<keyword id="KW-0648">Protein biosynthesis</keyword>
<gene>
    <name type="primary">EF-2</name>
</gene>
<dbReference type="EC" id="3.6.5.-" evidence="2"/>
<dbReference type="EMBL" id="L02417">
    <property type="protein sequence ID" value="AAA29097.1"/>
    <property type="molecule type" value="mRNA"/>
</dbReference>
<dbReference type="EMBL" id="D21259">
    <property type="protein sequence ID" value="BAA04800.1"/>
    <property type="molecule type" value="Genomic_DNA"/>
</dbReference>
<dbReference type="SMR" id="Q06193"/>
<dbReference type="VEuPathDB" id="AmoebaDB:EHI5A_197280"/>
<dbReference type="VEuPathDB" id="AmoebaDB:EHI7A_139120"/>
<dbReference type="VEuPathDB" id="AmoebaDB:EHI8A_150970"/>
<dbReference type="VEuPathDB" id="AmoebaDB:EHI_189490"/>
<dbReference type="VEuPathDB" id="AmoebaDB:KM1_077970"/>
<dbReference type="eggNOG" id="KOG0469">
    <property type="taxonomic scope" value="Eukaryota"/>
</dbReference>
<dbReference type="GO" id="GO:0005829">
    <property type="term" value="C:cytosol"/>
    <property type="evidence" value="ECO:0007669"/>
    <property type="project" value="TreeGrafter"/>
</dbReference>
<dbReference type="GO" id="GO:1990904">
    <property type="term" value="C:ribonucleoprotein complex"/>
    <property type="evidence" value="ECO:0007669"/>
    <property type="project" value="TreeGrafter"/>
</dbReference>
<dbReference type="GO" id="GO:0005525">
    <property type="term" value="F:GTP binding"/>
    <property type="evidence" value="ECO:0007669"/>
    <property type="project" value="UniProtKB-KW"/>
</dbReference>
<dbReference type="GO" id="GO:0003924">
    <property type="term" value="F:GTPase activity"/>
    <property type="evidence" value="ECO:0007669"/>
    <property type="project" value="InterPro"/>
</dbReference>
<dbReference type="GO" id="GO:0043022">
    <property type="term" value="F:ribosome binding"/>
    <property type="evidence" value="ECO:0007669"/>
    <property type="project" value="TreeGrafter"/>
</dbReference>
<dbReference type="GO" id="GO:0003746">
    <property type="term" value="F:translation elongation factor activity"/>
    <property type="evidence" value="ECO:0007669"/>
    <property type="project" value="UniProtKB-KW"/>
</dbReference>
<dbReference type="CDD" id="cd01681">
    <property type="entry name" value="aeEF2_snRNP_like_IV"/>
    <property type="match status" value="1"/>
</dbReference>
<dbReference type="CDD" id="cd04096">
    <property type="entry name" value="eEF2_snRNP_like_C"/>
    <property type="match status" value="1"/>
</dbReference>
<dbReference type="CDD" id="cd01885">
    <property type="entry name" value="EF2"/>
    <property type="match status" value="1"/>
</dbReference>
<dbReference type="CDD" id="cd16268">
    <property type="entry name" value="EF2_II"/>
    <property type="match status" value="1"/>
</dbReference>
<dbReference type="CDD" id="cd16261">
    <property type="entry name" value="EF2_snRNP_III"/>
    <property type="match status" value="1"/>
</dbReference>
<dbReference type="FunFam" id="2.40.30.10:FF:000010">
    <property type="entry name" value="Translation elongation factor 2"/>
    <property type="match status" value="1"/>
</dbReference>
<dbReference type="FunFam" id="3.30.230.10:FF:000006">
    <property type="entry name" value="Translation elongation factor 2"/>
    <property type="match status" value="1"/>
</dbReference>
<dbReference type="FunFam" id="3.30.70.240:FF:000003">
    <property type="entry name" value="Translation elongation factor 2"/>
    <property type="match status" value="1"/>
</dbReference>
<dbReference type="FunFam" id="3.30.70.870:FF:000002">
    <property type="entry name" value="Translation elongation factor 2"/>
    <property type="match status" value="1"/>
</dbReference>
<dbReference type="FunFam" id="3.40.50.300:FF:000058">
    <property type="entry name" value="Translation elongation factor 2"/>
    <property type="match status" value="1"/>
</dbReference>
<dbReference type="Gene3D" id="3.30.230.10">
    <property type="match status" value="1"/>
</dbReference>
<dbReference type="Gene3D" id="3.30.70.240">
    <property type="match status" value="1"/>
</dbReference>
<dbReference type="Gene3D" id="3.30.70.870">
    <property type="entry name" value="Elongation Factor G (Translational Gtpase), domain 3"/>
    <property type="match status" value="1"/>
</dbReference>
<dbReference type="Gene3D" id="3.40.50.300">
    <property type="entry name" value="P-loop containing nucleotide triphosphate hydrolases"/>
    <property type="match status" value="1"/>
</dbReference>
<dbReference type="Gene3D" id="2.40.30.10">
    <property type="entry name" value="Translation factors"/>
    <property type="match status" value="1"/>
</dbReference>
<dbReference type="InterPro" id="IPR041095">
    <property type="entry name" value="EFG_II"/>
</dbReference>
<dbReference type="InterPro" id="IPR035647">
    <property type="entry name" value="EFG_III/V"/>
</dbReference>
<dbReference type="InterPro" id="IPR000640">
    <property type="entry name" value="EFG_V-like"/>
</dbReference>
<dbReference type="InterPro" id="IPR004161">
    <property type="entry name" value="EFTu-like_2"/>
</dbReference>
<dbReference type="InterPro" id="IPR031157">
    <property type="entry name" value="G_TR_CS"/>
</dbReference>
<dbReference type="InterPro" id="IPR027417">
    <property type="entry name" value="P-loop_NTPase"/>
</dbReference>
<dbReference type="InterPro" id="IPR020568">
    <property type="entry name" value="Ribosomal_Su5_D2-typ_SF"/>
</dbReference>
<dbReference type="InterPro" id="IPR014721">
    <property type="entry name" value="Ribsml_uS5_D2-typ_fold_subgr"/>
</dbReference>
<dbReference type="InterPro" id="IPR005225">
    <property type="entry name" value="Small_GTP-bd"/>
</dbReference>
<dbReference type="InterPro" id="IPR000795">
    <property type="entry name" value="T_Tr_GTP-bd_dom"/>
</dbReference>
<dbReference type="InterPro" id="IPR009000">
    <property type="entry name" value="Transl_B-barrel_sf"/>
</dbReference>
<dbReference type="InterPro" id="IPR005517">
    <property type="entry name" value="Transl_elong_EFG/EF2_IV"/>
</dbReference>
<dbReference type="NCBIfam" id="TIGR00231">
    <property type="entry name" value="small_GTP"/>
    <property type="match status" value="1"/>
</dbReference>
<dbReference type="PANTHER" id="PTHR42908:SF10">
    <property type="entry name" value="EUKARYOTIC TRANSLATION ELONGATION FACTOR 2"/>
    <property type="match status" value="1"/>
</dbReference>
<dbReference type="PANTHER" id="PTHR42908">
    <property type="entry name" value="TRANSLATION ELONGATION FACTOR-RELATED"/>
    <property type="match status" value="1"/>
</dbReference>
<dbReference type="Pfam" id="PF00679">
    <property type="entry name" value="EFG_C"/>
    <property type="match status" value="1"/>
</dbReference>
<dbReference type="Pfam" id="PF14492">
    <property type="entry name" value="EFG_III"/>
    <property type="match status" value="1"/>
</dbReference>
<dbReference type="Pfam" id="PF03764">
    <property type="entry name" value="EFG_IV"/>
    <property type="match status" value="1"/>
</dbReference>
<dbReference type="Pfam" id="PF00009">
    <property type="entry name" value="GTP_EFTU"/>
    <property type="match status" value="1"/>
</dbReference>
<dbReference type="Pfam" id="PF03144">
    <property type="entry name" value="GTP_EFTU_D2"/>
    <property type="match status" value="1"/>
</dbReference>
<dbReference type="PRINTS" id="PR00315">
    <property type="entry name" value="ELONGATNFCT"/>
</dbReference>
<dbReference type="SMART" id="SM00838">
    <property type="entry name" value="EFG_C"/>
    <property type="match status" value="1"/>
</dbReference>
<dbReference type="SMART" id="SM00889">
    <property type="entry name" value="EFG_IV"/>
    <property type="match status" value="1"/>
</dbReference>
<dbReference type="SUPFAM" id="SSF54980">
    <property type="entry name" value="EF-G C-terminal domain-like"/>
    <property type="match status" value="2"/>
</dbReference>
<dbReference type="SUPFAM" id="SSF52540">
    <property type="entry name" value="P-loop containing nucleoside triphosphate hydrolases"/>
    <property type="match status" value="1"/>
</dbReference>
<dbReference type="SUPFAM" id="SSF54211">
    <property type="entry name" value="Ribosomal protein S5 domain 2-like"/>
    <property type="match status" value="1"/>
</dbReference>
<dbReference type="SUPFAM" id="SSF50447">
    <property type="entry name" value="Translation proteins"/>
    <property type="match status" value="1"/>
</dbReference>
<dbReference type="PROSITE" id="PS00301">
    <property type="entry name" value="G_TR_1"/>
    <property type="match status" value="1"/>
</dbReference>
<dbReference type="PROSITE" id="PS51722">
    <property type="entry name" value="G_TR_2"/>
    <property type="match status" value="1"/>
</dbReference>
<accession>Q06193</accession>